<gene>
    <name type="primary">xgeA</name>
    <name type="ORF">AN0452</name>
</gene>
<comment type="function">
    <text evidence="2">Catalyzes endohydrolysis of 1,4-beta-D-glucosidic linkages in xyloglucan with retention of the beta-configuration of the glycosyl residues. Specific for xyloglucan and does not hydrolyze other cell wall components. Active against tamarind xyloglucan.</text>
</comment>
<comment type="catalytic activity">
    <reaction>
        <text>xyloglucan + H2O = xyloglucan oligosaccharides.</text>
        <dbReference type="EC" id="3.2.1.151"/>
    </reaction>
</comment>
<comment type="biophysicochemical properties">
    <phDependence>
        <text evidence="2">Optimum pH is 6.5.</text>
    </phDependence>
    <temperatureDependence>
        <text evidence="2">Optimum temperature is 47 degrees Celsius.</text>
    </temperatureDependence>
</comment>
<comment type="subcellular location">
    <subcellularLocation>
        <location evidence="3">Secreted</location>
    </subcellularLocation>
</comment>
<comment type="similarity">
    <text evidence="3">Belongs to the glycosyl hydrolase 12 (cellulase H) family.</text>
</comment>
<reference key="1">
    <citation type="journal article" date="2006" name="Proc. Natl. Acad. Sci. U.S.A.">
        <title>Development and application of a suite of polysaccharide-degrading enzymes for analyzing plant cell walls.</title>
        <authorList>
            <person name="Bauer S."/>
            <person name="Vasu P."/>
            <person name="Persson S."/>
            <person name="Mort A.J."/>
            <person name="Somerville C.R."/>
        </authorList>
    </citation>
    <scope>NUCLEOTIDE SEQUENCE [MRNA]</scope>
    <scope>FUNCTION</scope>
    <scope>BIOPHYSICOCHEMICAL PROPERTIES</scope>
    <source>
        <strain>FGSC A4 / ATCC 38163 / CBS 112.46 / NRRL 194 / M139</strain>
    </source>
</reference>
<reference key="2">
    <citation type="journal article" date="2005" name="Nature">
        <title>Sequencing of Aspergillus nidulans and comparative analysis with A. fumigatus and A. oryzae.</title>
        <authorList>
            <person name="Galagan J.E."/>
            <person name="Calvo S.E."/>
            <person name="Cuomo C."/>
            <person name="Ma L.-J."/>
            <person name="Wortman J.R."/>
            <person name="Batzoglou S."/>
            <person name="Lee S.-I."/>
            <person name="Bastuerkmen M."/>
            <person name="Spevak C.C."/>
            <person name="Clutterbuck J."/>
            <person name="Kapitonov V."/>
            <person name="Jurka J."/>
            <person name="Scazzocchio C."/>
            <person name="Farman M.L."/>
            <person name="Butler J."/>
            <person name="Purcell S."/>
            <person name="Harris S."/>
            <person name="Braus G.H."/>
            <person name="Draht O."/>
            <person name="Busch S."/>
            <person name="D'Enfert C."/>
            <person name="Bouchier C."/>
            <person name="Goldman G.H."/>
            <person name="Bell-Pedersen D."/>
            <person name="Griffiths-Jones S."/>
            <person name="Doonan J.H."/>
            <person name="Yu J."/>
            <person name="Vienken K."/>
            <person name="Pain A."/>
            <person name="Freitag M."/>
            <person name="Selker E.U."/>
            <person name="Archer D.B."/>
            <person name="Penalva M.A."/>
            <person name="Oakley B.R."/>
            <person name="Momany M."/>
            <person name="Tanaka T."/>
            <person name="Kumagai T."/>
            <person name="Asai K."/>
            <person name="Machida M."/>
            <person name="Nierman W.C."/>
            <person name="Denning D.W."/>
            <person name="Caddick M.X."/>
            <person name="Hynes M."/>
            <person name="Paoletti M."/>
            <person name="Fischer R."/>
            <person name="Miller B.L."/>
            <person name="Dyer P.S."/>
            <person name="Sachs M.S."/>
            <person name="Osmani S.A."/>
            <person name="Birren B.W."/>
        </authorList>
    </citation>
    <scope>NUCLEOTIDE SEQUENCE [LARGE SCALE GENOMIC DNA]</scope>
    <source>
        <strain>FGSC A4 / ATCC 38163 / CBS 112.46 / NRRL 194 / M139</strain>
    </source>
</reference>
<reference key="3">
    <citation type="journal article" date="2009" name="Fungal Genet. Biol.">
        <title>The 2008 update of the Aspergillus nidulans genome annotation: a community effort.</title>
        <authorList>
            <person name="Wortman J.R."/>
            <person name="Gilsenan J.M."/>
            <person name="Joardar V."/>
            <person name="Deegan J."/>
            <person name="Clutterbuck J."/>
            <person name="Andersen M.R."/>
            <person name="Archer D."/>
            <person name="Bencina M."/>
            <person name="Braus G."/>
            <person name="Coutinho P."/>
            <person name="von Dohren H."/>
            <person name="Doonan J."/>
            <person name="Driessen A.J."/>
            <person name="Durek P."/>
            <person name="Espeso E."/>
            <person name="Fekete E."/>
            <person name="Flipphi M."/>
            <person name="Estrada C.G."/>
            <person name="Geysens S."/>
            <person name="Goldman G."/>
            <person name="de Groot P.W."/>
            <person name="Hansen K."/>
            <person name="Harris S.D."/>
            <person name="Heinekamp T."/>
            <person name="Helmstaedt K."/>
            <person name="Henrissat B."/>
            <person name="Hofmann G."/>
            <person name="Homan T."/>
            <person name="Horio T."/>
            <person name="Horiuchi H."/>
            <person name="James S."/>
            <person name="Jones M."/>
            <person name="Karaffa L."/>
            <person name="Karanyi Z."/>
            <person name="Kato M."/>
            <person name="Keller N."/>
            <person name="Kelly D.E."/>
            <person name="Kiel J.A."/>
            <person name="Kim J.M."/>
            <person name="van der Klei I.J."/>
            <person name="Klis F.M."/>
            <person name="Kovalchuk A."/>
            <person name="Krasevec N."/>
            <person name="Kubicek C.P."/>
            <person name="Liu B."/>
            <person name="Maccabe A."/>
            <person name="Meyer V."/>
            <person name="Mirabito P."/>
            <person name="Miskei M."/>
            <person name="Mos M."/>
            <person name="Mullins J."/>
            <person name="Nelson D.R."/>
            <person name="Nielsen J."/>
            <person name="Oakley B.R."/>
            <person name="Osmani S.A."/>
            <person name="Pakula T."/>
            <person name="Paszewski A."/>
            <person name="Paulsen I."/>
            <person name="Pilsyk S."/>
            <person name="Pocsi I."/>
            <person name="Punt P.J."/>
            <person name="Ram A.F."/>
            <person name="Ren Q."/>
            <person name="Robellet X."/>
            <person name="Robson G."/>
            <person name="Seiboth B."/>
            <person name="van Solingen P."/>
            <person name="Specht T."/>
            <person name="Sun J."/>
            <person name="Taheri-Talesh N."/>
            <person name="Takeshita N."/>
            <person name="Ussery D."/>
            <person name="vanKuyk P.A."/>
            <person name="Visser H."/>
            <person name="van de Vondervoort P.J."/>
            <person name="de Vries R.P."/>
            <person name="Walton J."/>
            <person name="Xiang X."/>
            <person name="Xiong Y."/>
            <person name="Zeng A.P."/>
            <person name="Brandt B.W."/>
            <person name="Cornell M.J."/>
            <person name="van den Hondel C.A."/>
            <person name="Visser J."/>
            <person name="Oliver S.G."/>
            <person name="Turner G."/>
        </authorList>
    </citation>
    <scope>GENOME REANNOTATION</scope>
    <source>
        <strain>FGSC A4 / ATCC 38163 / CBS 112.46 / NRRL 194 / M139</strain>
    </source>
</reference>
<accession>Q5BG78</accession>
<accession>C8VT79</accession>
<accession>Q1HFV8</accession>
<name>XGEA_EMENI</name>
<keyword id="KW-0119">Carbohydrate metabolism</keyword>
<keyword id="KW-0961">Cell wall biogenesis/degradation</keyword>
<keyword id="KW-0325">Glycoprotein</keyword>
<keyword id="KW-0326">Glycosidase</keyword>
<keyword id="KW-0378">Hydrolase</keyword>
<keyword id="KW-0624">Polysaccharide degradation</keyword>
<keyword id="KW-1185">Reference proteome</keyword>
<keyword id="KW-0964">Secreted</keyword>
<keyword id="KW-0732">Signal</keyword>
<evidence type="ECO:0000255" key="1"/>
<evidence type="ECO:0000269" key="2">
    <source>
    </source>
</evidence>
<evidence type="ECO:0000305" key="3"/>
<sequence length="239" mass="25150">MKLLALSLASLASAATITRRADFCGQWDTATAGNFIVYNNLWGQDNADSGSQCTGVDSANGNSVSWHTTWSWSGGSSSVKSYANAAYQFTATQLSSLSSIPSTWEWQYSTTDVVANVAYDLFTSSSIGGDSEYEIMIWLAALGGAGPISSTGSSIATVTLGGVTWNLYSGPNGSMQVYSFVASSTTESFSADLMDFINYLVENQGLSNSQYLTHVQAGTEPFTGSDATLTVSSYSVSVS</sequence>
<organism>
    <name type="scientific">Emericella nidulans (strain FGSC A4 / ATCC 38163 / CBS 112.46 / NRRL 194 / M139)</name>
    <name type="common">Aspergillus nidulans</name>
    <dbReference type="NCBI Taxonomy" id="227321"/>
    <lineage>
        <taxon>Eukaryota</taxon>
        <taxon>Fungi</taxon>
        <taxon>Dikarya</taxon>
        <taxon>Ascomycota</taxon>
        <taxon>Pezizomycotina</taxon>
        <taxon>Eurotiomycetes</taxon>
        <taxon>Eurotiomycetidae</taxon>
        <taxon>Eurotiales</taxon>
        <taxon>Aspergillaceae</taxon>
        <taxon>Aspergillus</taxon>
        <taxon>Aspergillus subgen. Nidulantes</taxon>
    </lineage>
</organism>
<protein>
    <recommendedName>
        <fullName>Xyloglucan-specific endo-beta-1,4-glucanase A</fullName>
        <ecNumber>3.2.1.151</ecNumber>
    </recommendedName>
    <alternativeName>
        <fullName>Xyloglucanase A</fullName>
    </alternativeName>
    <alternativeName>
        <fullName>Xyloglucanendohydrolase A</fullName>
    </alternativeName>
</protein>
<proteinExistence type="evidence at protein level"/>
<feature type="signal peptide" evidence="1">
    <location>
        <begin position="1"/>
        <end position="14"/>
    </location>
</feature>
<feature type="chain" id="PRO_0000394075" description="Xyloglucan-specific endo-beta-1,4-glucanase A">
    <location>
        <begin position="15"/>
        <end position="239"/>
    </location>
</feature>
<feature type="glycosylation site" description="N-linked (GlcNAc...) asparagine" evidence="1">
    <location>
        <position position="172"/>
    </location>
</feature>
<dbReference type="EC" id="3.2.1.151"/>
<dbReference type="EMBL" id="DQ490466">
    <property type="protein sequence ID" value="ABF50842.1"/>
    <property type="molecule type" value="mRNA"/>
</dbReference>
<dbReference type="EMBL" id="AACD01000007">
    <property type="protein sequence ID" value="EAA66551.1"/>
    <property type="molecule type" value="Genomic_DNA"/>
</dbReference>
<dbReference type="EMBL" id="BN001308">
    <property type="protein sequence ID" value="CBF89457.1"/>
    <property type="molecule type" value="Genomic_DNA"/>
</dbReference>
<dbReference type="RefSeq" id="XP_658056.1">
    <property type="nucleotide sequence ID" value="XM_652964.1"/>
</dbReference>
<dbReference type="SMR" id="Q5BG78"/>
<dbReference type="STRING" id="227321.Q5BG78"/>
<dbReference type="CAZy" id="GH12">
    <property type="family name" value="Glycoside Hydrolase Family 12"/>
</dbReference>
<dbReference type="GlyCosmos" id="Q5BG78">
    <property type="glycosylation" value="1 site, No reported glycans"/>
</dbReference>
<dbReference type="EnsemblFungi" id="CBF89457">
    <property type="protein sequence ID" value="CBF89457"/>
    <property type="gene ID" value="ANIA_00452"/>
</dbReference>
<dbReference type="KEGG" id="ani:ANIA_00452"/>
<dbReference type="VEuPathDB" id="FungiDB:AN0452"/>
<dbReference type="eggNOG" id="ENOG502RW43">
    <property type="taxonomic scope" value="Eukaryota"/>
</dbReference>
<dbReference type="HOGENOM" id="CLU_051064_0_1_1"/>
<dbReference type="InParanoid" id="Q5BG78"/>
<dbReference type="OMA" id="NLWGQAQ"/>
<dbReference type="OrthoDB" id="95118at2759"/>
<dbReference type="Proteomes" id="UP000000560">
    <property type="component" value="Chromosome VIII"/>
</dbReference>
<dbReference type="GO" id="GO:0005576">
    <property type="term" value="C:extracellular region"/>
    <property type="evidence" value="ECO:0007669"/>
    <property type="project" value="UniProtKB-SubCell"/>
</dbReference>
<dbReference type="GO" id="GO:0008810">
    <property type="term" value="F:cellulase activity"/>
    <property type="evidence" value="ECO:0007669"/>
    <property type="project" value="InterPro"/>
</dbReference>
<dbReference type="GO" id="GO:0016798">
    <property type="term" value="F:hydrolase activity, acting on glycosyl bonds"/>
    <property type="evidence" value="ECO:0000318"/>
    <property type="project" value="GO_Central"/>
</dbReference>
<dbReference type="GO" id="GO:0033946">
    <property type="term" value="F:xyloglucan-specific endo-beta-1,4-glucanase activity"/>
    <property type="evidence" value="ECO:0000314"/>
    <property type="project" value="UniProtKB"/>
</dbReference>
<dbReference type="GO" id="GO:0071555">
    <property type="term" value="P:cell wall organization"/>
    <property type="evidence" value="ECO:0007669"/>
    <property type="project" value="UniProtKB-KW"/>
</dbReference>
<dbReference type="GO" id="GO:0000272">
    <property type="term" value="P:polysaccharide catabolic process"/>
    <property type="evidence" value="ECO:0007669"/>
    <property type="project" value="UniProtKB-KW"/>
</dbReference>
<dbReference type="GO" id="GO:0010411">
    <property type="term" value="P:xyloglucan metabolic process"/>
    <property type="evidence" value="ECO:0000314"/>
    <property type="project" value="UniProtKB"/>
</dbReference>
<dbReference type="Gene3D" id="2.60.120.180">
    <property type="match status" value="1"/>
</dbReference>
<dbReference type="InterPro" id="IPR013320">
    <property type="entry name" value="ConA-like_dom_sf"/>
</dbReference>
<dbReference type="InterPro" id="IPR013319">
    <property type="entry name" value="GH11/12"/>
</dbReference>
<dbReference type="InterPro" id="IPR002594">
    <property type="entry name" value="GH12"/>
</dbReference>
<dbReference type="PANTHER" id="PTHR34002">
    <property type="entry name" value="BLR1656 PROTEIN"/>
    <property type="match status" value="1"/>
</dbReference>
<dbReference type="PANTHER" id="PTHR34002:SF9">
    <property type="entry name" value="XYLOGLUCAN-SPECIFIC ENDO-BETA-1,4-GLUCANASE A"/>
    <property type="match status" value="1"/>
</dbReference>
<dbReference type="Pfam" id="PF01670">
    <property type="entry name" value="Glyco_hydro_12"/>
    <property type="match status" value="1"/>
</dbReference>
<dbReference type="SUPFAM" id="SSF49899">
    <property type="entry name" value="Concanavalin A-like lectins/glucanases"/>
    <property type="match status" value="1"/>
</dbReference>